<gene>
    <name evidence="2" type="primary">ccsA</name>
    <name type="ordered locus">PCC7424_2995</name>
</gene>
<dbReference type="EMBL" id="CP001291">
    <property type="protein sequence ID" value="ACK71397.1"/>
    <property type="molecule type" value="Genomic_DNA"/>
</dbReference>
<dbReference type="RefSeq" id="WP_015954994.1">
    <property type="nucleotide sequence ID" value="NC_011729.1"/>
</dbReference>
<dbReference type="SMR" id="B7KA41"/>
<dbReference type="STRING" id="65393.PCC7424_2995"/>
<dbReference type="KEGG" id="cyc:PCC7424_2995"/>
<dbReference type="eggNOG" id="COG0755">
    <property type="taxonomic scope" value="Bacteria"/>
</dbReference>
<dbReference type="HOGENOM" id="CLU_049710_2_4_3"/>
<dbReference type="OrthoDB" id="9814290at2"/>
<dbReference type="Proteomes" id="UP000002384">
    <property type="component" value="Chromosome"/>
</dbReference>
<dbReference type="GO" id="GO:0031676">
    <property type="term" value="C:plasma membrane-derived thylakoid membrane"/>
    <property type="evidence" value="ECO:0007669"/>
    <property type="project" value="UniProtKB-SubCell"/>
</dbReference>
<dbReference type="GO" id="GO:0020037">
    <property type="term" value="F:heme binding"/>
    <property type="evidence" value="ECO:0007669"/>
    <property type="project" value="InterPro"/>
</dbReference>
<dbReference type="GO" id="GO:0017004">
    <property type="term" value="P:cytochrome complex assembly"/>
    <property type="evidence" value="ECO:0007669"/>
    <property type="project" value="UniProtKB-UniRule"/>
</dbReference>
<dbReference type="HAMAP" id="MF_01391">
    <property type="entry name" value="CytC_CcsA"/>
    <property type="match status" value="1"/>
</dbReference>
<dbReference type="InterPro" id="IPR002541">
    <property type="entry name" value="Cyt_c_assembly"/>
</dbReference>
<dbReference type="InterPro" id="IPR017562">
    <property type="entry name" value="Cyt_c_biogenesis_CcsA"/>
</dbReference>
<dbReference type="InterPro" id="IPR045062">
    <property type="entry name" value="Cyt_c_biogenesis_CcsA/CcmC"/>
</dbReference>
<dbReference type="NCBIfam" id="TIGR03144">
    <property type="entry name" value="cytochr_II_ccsB"/>
    <property type="match status" value="1"/>
</dbReference>
<dbReference type="PANTHER" id="PTHR30071:SF1">
    <property type="entry name" value="CYTOCHROME B_B6 PROTEIN-RELATED"/>
    <property type="match status" value="1"/>
</dbReference>
<dbReference type="PANTHER" id="PTHR30071">
    <property type="entry name" value="HEME EXPORTER PROTEIN C"/>
    <property type="match status" value="1"/>
</dbReference>
<dbReference type="Pfam" id="PF01578">
    <property type="entry name" value="Cytochrom_C_asm"/>
    <property type="match status" value="1"/>
</dbReference>
<organism>
    <name type="scientific">Gloeothece citriformis (strain PCC 7424)</name>
    <name type="common">Cyanothece sp. (strain PCC 7424)</name>
    <dbReference type="NCBI Taxonomy" id="65393"/>
    <lineage>
        <taxon>Bacteria</taxon>
        <taxon>Bacillati</taxon>
        <taxon>Cyanobacteriota</taxon>
        <taxon>Cyanophyceae</taxon>
        <taxon>Oscillatoriophycideae</taxon>
        <taxon>Chroococcales</taxon>
        <taxon>Aphanothecaceae</taxon>
        <taxon>Gloeothece</taxon>
        <taxon>Gloeothece citriformis</taxon>
    </lineage>
</organism>
<name>CCSA_GLOC7</name>
<proteinExistence type="inferred from homology"/>
<sequence length="328" mass="35362">MNLVNLENILDNTSFLVLFLTMMIYWVGAAFPSVPYLQALGTAGVAIANLCIAALLGARWIEAGYFPISNLYESLFFLAWGVTAAHLIAQQMSRSHLVGVVTTPVAMGISAFAALTLPADMQTSAPLVPALKSNWLMMHVSVMMLSYATLMVGSALAIAFLFVTKGQNVELHGSSVGTGGYRTGVRLNKPQPVQETAIEGSGNVAVLNTTVVSDAPSLSLQRLSIADTLDNISYRIIGLGFPLLTIGIIAGAVWANEAWGSYWSWDPKETWALITWLVFAAYLHARITKGWQGRKPAILAASGFVVVWVCYLGVNLLGKGLHSYGWFF</sequence>
<evidence type="ECO:0000250" key="1"/>
<evidence type="ECO:0000255" key="2">
    <source>
        <dbReference type="HAMAP-Rule" id="MF_01391"/>
    </source>
</evidence>
<keyword id="KW-0201">Cytochrome c-type biogenesis</keyword>
<keyword id="KW-0472">Membrane</keyword>
<keyword id="KW-1185">Reference proteome</keyword>
<keyword id="KW-0793">Thylakoid</keyword>
<keyword id="KW-0812">Transmembrane</keyword>
<keyword id="KW-1133">Transmembrane helix</keyword>
<protein>
    <recommendedName>
        <fullName evidence="2">Cytochrome c biogenesis protein CcsA</fullName>
    </recommendedName>
</protein>
<accession>B7KA41</accession>
<comment type="function">
    <text evidence="2">Required during biogenesis of c-type cytochromes (cytochrome c6 and cytochrome f) at the step of heme attachment.</text>
</comment>
<comment type="subunit">
    <text evidence="1">May interact with ccs1.</text>
</comment>
<comment type="subcellular location">
    <subcellularLocation>
        <location evidence="2">Cellular thylakoid membrane</location>
        <topology evidence="2">Multi-pass membrane protein</topology>
    </subcellularLocation>
</comment>
<comment type="similarity">
    <text evidence="2">Belongs to the CcmF/CycK/Ccl1/NrfE/CcsA family.</text>
</comment>
<feature type="chain" id="PRO_1000145248" description="Cytochrome c biogenesis protein CcsA">
    <location>
        <begin position="1"/>
        <end position="328"/>
    </location>
</feature>
<feature type="transmembrane region" description="Helical" evidence="2">
    <location>
        <begin position="15"/>
        <end position="35"/>
    </location>
</feature>
<feature type="transmembrane region" description="Helical" evidence="2">
    <location>
        <begin position="37"/>
        <end position="57"/>
    </location>
</feature>
<feature type="transmembrane region" description="Helical" evidence="2">
    <location>
        <begin position="68"/>
        <end position="88"/>
    </location>
</feature>
<feature type="transmembrane region" description="Helical" evidence="2">
    <location>
        <begin position="97"/>
        <end position="117"/>
    </location>
</feature>
<feature type="transmembrane region" description="Helical" evidence="2">
    <location>
        <begin position="142"/>
        <end position="162"/>
    </location>
</feature>
<feature type="transmembrane region" description="Helical" evidence="2">
    <location>
        <begin position="236"/>
        <end position="256"/>
    </location>
</feature>
<feature type="transmembrane region" description="Helical" evidence="2">
    <location>
        <begin position="271"/>
        <end position="291"/>
    </location>
</feature>
<feature type="transmembrane region" description="Helical" evidence="2">
    <location>
        <begin position="297"/>
        <end position="317"/>
    </location>
</feature>
<reference key="1">
    <citation type="journal article" date="2011" name="MBio">
        <title>Novel metabolic attributes of the genus Cyanothece, comprising a group of unicellular nitrogen-fixing Cyanobacteria.</title>
        <authorList>
            <person name="Bandyopadhyay A."/>
            <person name="Elvitigala T."/>
            <person name="Welsh E."/>
            <person name="Stockel J."/>
            <person name="Liberton M."/>
            <person name="Min H."/>
            <person name="Sherman L.A."/>
            <person name="Pakrasi H.B."/>
        </authorList>
    </citation>
    <scope>NUCLEOTIDE SEQUENCE [LARGE SCALE GENOMIC DNA]</scope>
    <source>
        <strain>PCC 7424</strain>
    </source>
</reference>